<reference key="1">
    <citation type="online journal article" date="1998" name="Plant Gene Register">
        <title>Nucleotide sequence of a cDNA clone encoding glutamyl-tRNA reductase from rice.</title>
        <authorList>
            <person name="Nakayashiki T."/>
            <person name="Inokuchi H."/>
        </authorList>
        <locator>PGR98-080</locator>
    </citation>
    <scope>NUCLEOTIDE SEQUENCE [MRNA]</scope>
    <source>
        <strain>cv. IR36</strain>
    </source>
</reference>
<reference key="2">
    <citation type="journal article" date="2005" name="PLoS Biol.">
        <title>The genomes of Oryza sativa: a history of duplications.</title>
        <authorList>
            <person name="Yu J."/>
            <person name="Wang J."/>
            <person name="Lin W."/>
            <person name="Li S."/>
            <person name="Li H."/>
            <person name="Zhou J."/>
            <person name="Ni P."/>
            <person name="Dong W."/>
            <person name="Hu S."/>
            <person name="Zeng C."/>
            <person name="Zhang J."/>
            <person name="Zhang Y."/>
            <person name="Li R."/>
            <person name="Xu Z."/>
            <person name="Li S."/>
            <person name="Li X."/>
            <person name="Zheng H."/>
            <person name="Cong L."/>
            <person name="Lin L."/>
            <person name="Yin J."/>
            <person name="Geng J."/>
            <person name="Li G."/>
            <person name="Shi J."/>
            <person name="Liu J."/>
            <person name="Lv H."/>
            <person name="Li J."/>
            <person name="Wang J."/>
            <person name="Deng Y."/>
            <person name="Ran L."/>
            <person name="Shi X."/>
            <person name="Wang X."/>
            <person name="Wu Q."/>
            <person name="Li C."/>
            <person name="Ren X."/>
            <person name="Wang J."/>
            <person name="Wang X."/>
            <person name="Li D."/>
            <person name="Liu D."/>
            <person name="Zhang X."/>
            <person name="Ji Z."/>
            <person name="Zhao W."/>
            <person name="Sun Y."/>
            <person name="Zhang Z."/>
            <person name="Bao J."/>
            <person name="Han Y."/>
            <person name="Dong L."/>
            <person name="Ji J."/>
            <person name="Chen P."/>
            <person name="Wu S."/>
            <person name="Liu J."/>
            <person name="Xiao Y."/>
            <person name="Bu D."/>
            <person name="Tan J."/>
            <person name="Yang L."/>
            <person name="Ye C."/>
            <person name="Zhang J."/>
            <person name="Xu J."/>
            <person name="Zhou Y."/>
            <person name="Yu Y."/>
            <person name="Zhang B."/>
            <person name="Zhuang S."/>
            <person name="Wei H."/>
            <person name="Liu B."/>
            <person name="Lei M."/>
            <person name="Yu H."/>
            <person name="Li Y."/>
            <person name="Xu H."/>
            <person name="Wei S."/>
            <person name="He X."/>
            <person name="Fang L."/>
            <person name="Zhang Z."/>
            <person name="Zhang Y."/>
            <person name="Huang X."/>
            <person name="Su Z."/>
            <person name="Tong W."/>
            <person name="Li J."/>
            <person name="Tong Z."/>
            <person name="Li S."/>
            <person name="Ye J."/>
            <person name="Wang L."/>
            <person name="Fang L."/>
            <person name="Lei T."/>
            <person name="Chen C.-S."/>
            <person name="Chen H.-C."/>
            <person name="Xu Z."/>
            <person name="Li H."/>
            <person name="Huang H."/>
            <person name="Zhang F."/>
            <person name="Xu H."/>
            <person name="Li N."/>
            <person name="Zhao C."/>
            <person name="Li S."/>
            <person name="Dong L."/>
            <person name="Huang Y."/>
            <person name="Li L."/>
            <person name="Xi Y."/>
            <person name="Qi Q."/>
            <person name="Li W."/>
            <person name="Zhang B."/>
            <person name="Hu W."/>
            <person name="Zhang Y."/>
            <person name="Tian X."/>
            <person name="Jiao Y."/>
            <person name="Liang X."/>
            <person name="Jin J."/>
            <person name="Gao L."/>
            <person name="Zheng W."/>
            <person name="Hao B."/>
            <person name="Liu S.-M."/>
            <person name="Wang W."/>
            <person name="Yuan L."/>
            <person name="Cao M."/>
            <person name="McDermott J."/>
            <person name="Samudrala R."/>
            <person name="Wang J."/>
            <person name="Wong G.K.-S."/>
            <person name="Yang H."/>
        </authorList>
    </citation>
    <scope>NUCLEOTIDE SEQUENCE [LARGE SCALE GENOMIC DNA]</scope>
    <source>
        <strain>cv. 93-11</strain>
    </source>
</reference>
<feature type="transit peptide" description="Chloroplast" evidence="2">
    <location>
        <begin position="1"/>
        <end position="48"/>
    </location>
</feature>
<feature type="chain" id="PRO_0000295656" description="Glutamyl-tRNA reductase, chloroplastic">
    <location>
        <begin position="49"/>
        <end position="537"/>
    </location>
</feature>
<feature type="active site" description="Nucleophile" evidence="1">
    <location>
        <position position="135"/>
    </location>
</feature>
<feature type="binding site" evidence="1">
    <location>
        <begin position="134"/>
        <end position="137"/>
    </location>
    <ligand>
        <name>substrate</name>
    </ligand>
</feature>
<feature type="binding site" evidence="1">
    <location>
        <position position="194"/>
    </location>
    <ligand>
        <name>substrate</name>
    </ligand>
</feature>
<feature type="binding site" evidence="1">
    <location>
        <begin position="199"/>
        <end position="201"/>
    </location>
    <ligand>
        <name>substrate</name>
    </ligand>
</feature>
<feature type="binding site" evidence="1">
    <location>
        <position position="205"/>
    </location>
    <ligand>
        <name>substrate</name>
    </ligand>
</feature>
<feature type="binding site" evidence="1">
    <location>
        <begin position="276"/>
        <end position="281"/>
    </location>
    <ligand>
        <name>NADP(+)</name>
        <dbReference type="ChEBI" id="CHEBI:58349"/>
    </ligand>
</feature>
<feature type="site" description="Important for activity" evidence="1">
    <location>
        <position position="184"/>
    </location>
</feature>
<feature type="sequence conflict" description="In Ref. 1; BAA25003." evidence="3" ref="1">
    <original>I</original>
    <variation>L</variation>
    <location>
        <position position="151"/>
    </location>
</feature>
<feature type="sequence conflict" description="In Ref. 1; BAA25003." evidence="3" ref="1">
    <original>Q</original>
    <variation>E</variation>
    <location>
        <position position="201"/>
    </location>
</feature>
<feature type="sequence conflict" description="In Ref. 1; BAA25003." evidence="3" ref="1">
    <original>S</original>
    <variation>A</variation>
    <location>
        <position position="463"/>
    </location>
</feature>
<feature type="sequence conflict" description="In Ref. 1; BAA25003." evidence="3" ref="1">
    <original>M</original>
    <variation>T</variation>
    <location>
        <position position="468"/>
    </location>
</feature>
<evidence type="ECO:0000250" key="1"/>
<evidence type="ECO:0000255" key="2"/>
<evidence type="ECO:0000305" key="3"/>
<sequence>MMASTTSATAAGGAFAAAKTRAGSSAAGGGACARVAAGGRRRSGVVVRCDAGVEAQAQAQAVAKAASVAALEQFKISADRYMKERSSIAVIGLSVHTAPVEMREKLAVAEELWPRAISELTSLNHIEEAAVLSTCNRMEIYVVALSWNRGIREVVDWMSKKSGIPASELREHLFMLRDSDATRHLFEVSAGLDSLVLGEGQILAQVKQVVRSGQNSGGLGKNIDRMFKDAITAGKRVRCETNISSGAVSVSSAAVELALMKLPKSECLSARMLLIGAGKMGKLVVKHLIAKGCKKVVVVNRSVERVDAIREEMKDIEIVYRPLTEMYEAAAEADVVFTSTASETPLFTKEHAEALPAISDAMGGVRLFVDISVPRNVSACVSEVGHARVYNVDDLKEVVEANKEDRLRKAMEAQTIITQELKRFEAWRDSLETVPTIKKLRSYADRIRASELEKCLQKIGEDSLTKKMRRSIEELSTGIVNKLLHGPLQHLRCDGSDSRTLDETLENMHALNRMFSLDTEKAIIEQKIKAKVEKSQN</sequence>
<proteinExistence type="evidence at transcript level"/>
<name>HEM1_ORYSI</name>
<accession>A2Z928</accession>
<accession>O48674</accession>
<accession>Q0IWL0</accession>
<accession>Q337F6</accession>
<accession>Q8LNE9</accession>
<accession>Q9FW00</accession>
<keyword id="KW-0149">Chlorophyll biosynthesis</keyword>
<keyword id="KW-0150">Chloroplast</keyword>
<keyword id="KW-0521">NADP</keyword>
<keyword id="KW-0560">Oxidoreductase</keyword>
<keyword id="KW-0934">Plastid</keyword>
<keyword id="KW-0627">Porphyrin biosynthesis</keyword>
<keyword id="KW-1185">Reference proteome</keyword>
<keyword id="KW-0809">Transit peptide</keyword>
<organism>
    <name type="scientific">Oryza sativa subsp. indica</name>
    <name type="common">Rice</name>
    <dbReference type="NCBI Taxonomy" id="39946"/>
    <lineage>
        <taxon>Eukaryota</taxon>
        <taxon>Viridiplantae</taxon>
        <taxon>Streptophyta</taxon>
        <taxon>Embryophyta</taxon>
        <taxon>Tracheophyta</taxon>
        <taxon>Spermatophyta</taxon>
        <taxon>Magnoliopsida</taxon>
        <taxon>Liliopsida</taxon>
        <taxon>Poales</taxon>
        <taxon>Poaceae</taxon>
        <taxon>BOP clade</taxon>
        <taxon>Oryzoideae</taxon>
        <taxon>Oryzeae</taxon>
        <taxon>Oryzinae</taxon>
        <taxon>Oryza</taxon>
        <taxon>Oryza sativa</taxon>
    </lineage>
</organism>
<dbReference type="EC" id="1.2.1.70"/>
<dbReference type="EMBL" id="AB011416">
    <property type="protein sequence ID" value="BAA25003.1"/>
    <property type="status" value="ALT_FRAME"/>
    <property type="molecule type" value="mRNA"/>
</dbReference>
<dbReference type="EMBL" id="CM000135">
    <property type="protein sequence ID" value="EAY79112.1"/>
    <property type="status" value="ALT_INIT"/>
    <property type="molecule type" value="Genomic_DNA"/>
</dbReference>
<dbReference type="SMR" id="A2Z928"/>
<dbReference type="STRING" id="39946.A2Z928"/>
<dbReference type="EnsemblPlants" id="OsKYG_10g0015910.01">
    <property type="protein sequence ID" value="OsKYG_10g0015910.01"/>
    <property type="gene ID" value="OsKYG_10g0015910"/>
</dbReference>
<dbReference type="EnsemblPlants" id="OsLaMu_10g0016560.01">
    <property type="protein sequence ID" value="OsLaMu_10g0016560.01"/>
    <property type="gene ID" value="OsLaMu_10g0016560"/>
</dbReference>
<dbReference type="EnsemblPlants" id="OsLima_10g0016030.01">
    <property type="protein sequence ID" value="OsLima_10g0016030.01"/>
    <property type="gene ID" value="OsLima_10g0016030"/>
</dbReference>
<dbReference type="EnsemblPlants" id="OsLiXu_10g0016140.01">
    <property type="protein sequence ID" value="OsLiXu_10g0016140.01"/>
    <property type="gene ID" value="OsLiXu_10g0016140"/>
</dbReference>
<dbReference type="EnsemblPlants" id="OsMH63_10G016240_01">
    <property type="protein sequence ID" value="OsMH63_10G016240_01"/>
    <property type="gene ID" value="OsMH63_10G016240"/>
</dbReference>
<dbReference type="EnsemblPlants" id="OsZS97_10G016340_01">
    <property type="protein sequence ID" value="OsZS97_10G016340_01"/>
    <property type="gene ID" value="OsZS97_10G016340"/>
</dbReference>
<dbReference type="Gramene" id="OsKYG_10g0015910.01">
    <property type="protein sequence ID" value="OsKYG_10g0015910.01"/>
    <property type="gene ID" value="OsKYG_10g0015910"/>
</dbReference>
<dbReference type="Gramene" id="OsLaMu_10g0016560.01">
    <property type="protein sequence ID" value="OsLaMu_10g0016560.01"/>
    <property type="gene ID" value="OsLaMu_10g0016560"/>
</dbReference>
<dbReference type="Gramene" id="OsLima_10g0016030.01">
    <property type="protein sequence ID" value="OsLima_10g0016030.01"/>
    <property type="gene ID" value="OsLima_10g0016030"/>
</dbReference>
<dbReference type="Gramene" id="OsLiXu_10g0016140.01">
    <property type="protein sequence ID" value="OsLiXu_10g0016140.01"/>
    <property type="gene ID" value="OsLiXu_10g0016140"/>
</dbReference>
<dbReference type="Gramene" id="OsMH63_10G016240_01">
    <property type="protein sequence ID" value="OsMH63_10G016240_01"/>
    <property type="gene ID" value="OsMH63_10G016240"/>
</dbReference>
<dbReference type="Gramene" id="OsZS97_10G016340_01">
    <property type="protein sequence ID" value="OsZS97_10G016340_01"/>
    <property type="gene ID" value="OsZS97_10G016340"/>
</dbReference>
<dbReference type="HOGENOM" id="CLU_035113_2_1_1"/>
<dbReference type="UniPathway" id="UPA00251">
    <property type="reaction ID" value="UER00316"/>
</dbReference>
<dbReference type="Proteomes" id="UP000007015">
    <property type="component" value="Chromosome 10"/>
</dbReference>
<dbReference type="GO" id="GO:0009507">
    <property type="term" value="C:chloroplast"/>
    <property type="evidence" value="ECO:0007669"/>
    <property type="project" value="UniProtKB-SubCell"/>
</dbReference>
<dbReference type="GO" id="GO:0008883">
    <property type="term" value="F:glutamyl-tRNA reductase activity"/>
    <property type="evidence" value="ECO:0007669"/>
    <property type="project" value="UniProtKB-EC"/>
</dbReference>
<dbReference type="GO" id="GO:0050661">
    <property type="term" value="F:NADP binding"/>
    <property type="evidence" value="ECO:0007669"/>
    <property type="project" value="InterPro"/>
</dbReference>
<dbReference type="GO" id="GO:0015995">
    <property type="term" value="P:chlorophyll biosynthetic process"/>
    <property type="evidence" value="ECO:0007669"/>
    <property type="project" value="UniProtKB-KW"/>
</dbReference>
<dbReference type="GO" id="GO:0006782">
    <property type="term" value="P:protoporphyrinogen IX biosynthetic process"/>
    <property type="evidence" value="ECO:0007669"/>
    <property type="project" value="UniProtKB-UniPathway"/>
</dbReference>
<dbReference type="CDD" id="cd05213">
    <property type="entry name" value="NAD_bind_Glutamyl_tRNA_reduct"/>
    <property type="match status" value="1"/>
</dbReference>
<dbReference type="FunFam" id="3.30.460.30:FF:000001">
    <property type="entry name" value="Glutamyl-tRNA reductase"/>
    <property type="match status" value="1"/>
</dbReference>
<dbReference type="FunFam" id="3.40.50.720:FF:000031">
    <property type="entry name" value="Glutamyl-tRNA reductase"/>
    <property type="match status" value="1"/>
</dbReference>
<dbReference type="Gene3D" id="3.30.460.30">
    <property type="entry name" value="Glutamyl-tRNA reductase, N-terminal domain"/>
    <property type="match status" value="1"/>
</dbReference>
<dbReference type="Gene3D" id="3.40.50.720">
    <property type="entry name" value="NAD(P)-binding Rossmann-like Domain"/>
    <property type="match status" value="1"/>
</dbReference>
<dbReference type="HAMAP" id="MF_00087">
    <property type="entry name" value="Glu_tRNA_reductase"/>
    <property type="match status" value="1"/>
</dbReference>
<dbReference type="InterPro" id="IPR000343">
    <property type="entry name" value="4pyrrol_synth_GluRdtase"/>
</dbReference>
<dbReference type="InterPro" id="IPR015896">
    <property type="entry name" value="4pyrrol_synth_GluRdtase_dimer"/>
</dbReference>
<dbReference type="InterPro" id="IPR015895">
    <property type="entry name" value="4pyrrol_synth_GluRdtase_N"/>
</dbReference>
<dbReference type="InterPro" id="IPR018214">
    <property type="entry name" value="GluRdtase_CS"/>
</dbReference>
<dbReference type="InterPro" id="IPR036453">
    <property type="entry name" value="GluRdtase_dimer_dom_sf"/>
</dbReference>
<dbReference type="InterPro" id="IPR036343">
    <property type="entry name" value="GluRdtase_N_sf"/>
</dbReference>
<dbReference type="InterPro" id="IPR036291">
    <property type="entry name" value="NAD(P)-bd_dom_sf"/>
</dbReference>
<dbReference type="InterPro" id="IPR006151">
    <property type="entry name" value="Shikm_DH/Glu-tRNA_Rdtase"/>
</dbReference>
<dbReference type="NCBIfam" id="TIGR01035">
    <property type="entry name" value="hemA"/>
    <property type="match status" value="1"/>
</dbReference>
<dbReference type="PANTHER" id="PTHR43120">
    <property type="entry name" value="GLUTAMYL-TRNA REDUCTASE 1, CHLOROPLASTIC"/>
    <property type="match status" value="1"/>
</dbReference>
<dbReference type="PANTHER" id="PTHR43120:SF1">
    <property type="entry name" value="GLUTAMYL-TRNA REDUCTASE 1, CHLOROPLASTIC"/>
    <property type="match status" value="1"/>
</dbReference>
<dbReference type="Pfam" id="PF00745">
    <property type="entry name" value="GlutR_dimer"/>
    <property type="match status" value="1"/>
</dbReference>
<dbReference type="Pfam" id="PF05201">
    <property type="entry name" value="GlutR_N"/>
    <property type="match status" value="1"/>
</dbReference>
<dbReference type="Pfam" id="PF01488">
    <property type="entry name" value="Shikimate_DH"/>
    <property type="match status" value="1"/>
</dbReference>
<dbReference type="SUPFAM" id="SSF69742">
    <property type="entry name" value="Glutamyl tRNA-reductase catalytic, N-terminal domain"/>
    <property type="match status" value="1"/>
</dbReference>
<dbReference type="SUPFAM" id="SSF69075">
    <property type="entry name" value="Glutamyl tRNA-reductase dimerization domain"/>
    <property type="match status" value="1"/>
</dbReference>
<dbReference type="SUPFAM" id="SSF51735">
    <property type="entry name" value="NAD(P)-binding Rossmann-fold domains"/>
    <property type="match status" value="1"/>
</dbReference>
<dbReference type="PROSITE" id="PS00747">
    <property type="entry name" value="GLUTR"/>
    <property type="match status" value="1"/>
</dbReference>
<gene>
    <name type="ORF">OsI_033071</name>
</gene>
<comment type="function">
    <text evidence="1">Catalyzes the NADPH-dependent reduction of glutamyl-tRNA(Glu) to glutamate 1-semialdehyde (GSA).</text>
</comment>
<comment type="catalytic activity">
    <reaction>
        <text>(S)-4-amino-5-oxopentanoate + tRNA(Glu) + NADP(+) = L-glutamyl-tRNA(Glu) + NADPH + H(+)</text>
        <dbReference type="Rhea" id="RHEA:12344"/>
        <dbReference type="Rhea" id="RHEA-COMP:9663"/>
        <dbReference type="Rhea" id="RHEA-COMP:9680"/>
        <dbReference type="ChEBI" id="CHEBI:15378"/>
        <dbReference type="ChEBI" id="CHEBI:57501"/>
        <dbReference type="ChEBI" id="CHEBI:57783"/>
        <dbReference type="ChEBI" id="CHEBI:58349"/>
        <dbReference type="ChEBI" id="CHEBI:78442"/>
        <dbReference type="ChEBI" id="CHEBI:78520"/>
        <dbReference type="EC" id="1.2.1.70"/>
    </reaction>
</comment>
<comment type="pathway">
    <text>Porphyrin-containing compound metabolism; protoporphyrin-IX biosynthesis; 5-aminolevulinate from L-glutamyl-tRNA(Glu): step 1/2.</text>
</comment>
<comment type="subcellular location">
    <subcellularLocation>
        <location evidence="1">Plastid</location>
        <location evidence="1">Chloroplast</location>
    </subcellularLocation>
</comment>
<comment type="miscellaneous">
    <text evidence="1">During catalysis, the active site Cys acts as a nucleophile attacking the alpha-carbonyl group of tRNA-bound glutamate with the formation of a thioester intermediate between enzyme and glutamate, and the concomitant release of tRNA(Glu). The thioester intermediate is finally reduced by direct hydride transfer from NADPH, to form the product GSA (By similarity).</text>
</comment>
<comment type="similarity">
    <text evidence="3">Belongs to the glutamyl-tRNA reductase family.</text>
</comment>
<comment type="sequence caution" evidence="3">
    <conflict type="frameshift">
        <sequence resource="EMBL-CDS" id="BAA25003"/>
    </conflict>
</comment>
<comment type="sequence caution" evidence="3">
    <conflict type="erroneous initiation">
        <sequence resource="EMBL-CDS" id="EAY79112"/>
    </conflict>
</comment>
<protein>
    <recommendedName>
        <fullName>Glutamyl-tRNA reductase, chloroplastic</fullName>
        <shortName>GluTR</shortName>
        <ecNumber>1.2.1.70</ecNumber>
    </recommendedName>
</protein>